<accession>Q6X2M3</accession>
<keyword id="KW-0677">Repeat</keyword>
<keyword id="KW-0964">Secreted</keyword>
<keyword id="KW-0732">Signal</keyword>
<comment type="function">
    <text evidence="1">Participates in the formation of a gel matrix (sperm coagulum) entrapping the accessory gland secretions and ejaculated spermatozoa.</text>
</comment>
<comment type="subunit">
    <text evidence="1">Interacts with SERPINA5.</text>
</comment>
<comment type="subcellular location">
    <subcellularLocation>
        <location evidence="1">Secreted</location>
    </subcellularLocation>
</comment>
<comment type="similarity">
    <text evidence="4">Belongs to the semenogelin family.</text>
</comment>
<sequence length="522" mass="59027">MKSIILFVLSLLLILEKQAAVMGQKCGSKGQLPSGSSQFPRGQKGQHYSGQKDEQHTKSKGSFSIQHTYHVDINDHDRTQKSQQYDLNAQHKMTKSKQHLGGSQELLNYKQEGRDHDKSKDHFHMIVIHHKGGQAHRGTQNPSQDQGNSPSGKGISSQYSNTEKRLWVHGLTKEQASASGAQKGRTQGGSQSSYVLQTEELVANKQQRETQNSPQNKGHYQNVVEMREEHSSKLQTSLHPAYQDRLQHGPKDIFTTQDELLVYNKNQHQTKNLNQDQEHGQKTHKISYQSSRTEERQLNRGEKSVQKDVSKGGISIQTEEKIHGKSQNQVTIHSQGQEHGHKENKMSYQSSSTEERHLNCGEKGIHKGVSKGSISIQTEEQIHGKSQNQVRIPSQAQEHGHKENKMSYQSSSTEERRLNYGGKSMQKDVSQSSTSFHTEKLVEGKSQIQTPNPNQDQWSVQNAKGKSDQSAGREQDLLSHEQKGRHQQESSEARNIVITEHEVAYDDHLTQQYNEDRNPVST</sequence>
<evidence type="ECO:0000250" key="1"/>
<evidence type="ECO:0000255" key="2"/>
<evidence type="ECO:0000256" key="3">
    <source>
        <dbReference type="SAM" id="MobiDB-lite"/>
    </source>
</evidence>
<evidence type="ECO:0000305" key="4"/>
<protein>
    <recommendedName>
        <fullName>Semenogelin-2</fullName>
    </recommendedName>
    <alternativeName>
        <fullName>Semenogelin II</fullName>
        <shortName>SGII</shortName>
    </alternativeName>
</protein>
<reference key="1">
    <citation type="journal article" date="2003" name="J. Mol. Evol.">
        <title>Evolution of the hominoid semenogelin genes, the major proteins of ejaculated semen.</title>
        <authorList>
            <person name="Jensen-Seaman M.I."/>
            <person name="Li W.-H."/>
        </authorList>
    </citation>
    <scope>NUCLEOTIDE SEQUENCE [GENOMIC DNA]</scope>
</reference>
<organism>
    <name type="scientific">Hylobates klossii</name>
    <name type="common">Kloss's gibbon</name>
    <dbReference type="NCBI Taxonomy" id="9587"/>
    <lineage>
        <taxon>Eukaryota</taxon>
        <taxon>Metazoa</taxon>
        <taxon>Chordata</taxon>
        <taxon>Craniata</taxon>
        <taxon>Vertebrata</taxon>
        <taxon>Euteleostomi</taxon>
        <taxon>Mammalia</taxon>
        <taxon>Eutheria</taxon>
        <taxon>Euarchontoglires</taxon>
        <taxon>Primates</taxon>
        <taxon>Haplorrhini</taxon>
        <taxon>Catarrhini</taxon>
        <taxon>Hylobatidae</taxon>
        <taxon>Hylobates</taxon>
    </lineage>
</organism>
<feature type="signal peptide" evidence="2">
    <location>
        <begin position="1"/>
        <end position="23"/>
    </location>
</feature>
<feature type="chain" id="PRO_0000032360" description="Semenogelin-2">
    <location>
        <begin position="24"/>
        <end position="522"/>
    </location>
</feature>
<feature type="region of interest" description="Disordered" evidence="3">
    <location>
        <begin position="26"/>
        <end position="62"/>
    </location>
</feature>
<feature type="region of interest" description="Disordered" evidence="3">
    <location>
        <begin position="132"/>
        <end position="158"/>
    </location>
</feature>
<feature type="region of interest" description="Disordered" evidence="3">
    <location>
        <begin position="272"/>
        <end position="358"/>
    </location>
</feature>
<feature type="region of interest" description="Disordered" evidence="3">
    <location>
        <begin position="379"/>
        <end position="522"/>
    </location>
</feature>
<feature type="compositionally biased region" description="Polar residues" evidence="3">
    <location>
        <begin position="31"/>
        <end position="40"/>
    </location>
</feature>
<feature type="compositionally biased region" description="Polar residues" evidence="3">
    <location>
        <begin position="137"/>
        <end position="158"/>
    </location>
</feature>
<feature type="compositionally biased region" description="Basic and acidic residues" evidence="3">
    <location>
        <begin position="292"/>
        <end position="310"/>
    </location>
</feature>
<feature type="compositionally biased region" description="Polar residues" evidence="3">
    <location>
        <begin position="325"/>
        <end position="335"/>
    </location>
</feature>
<feature type="compositionally biased region" description="Basic and acidic residues" evidence="3">
    <location>
        <begin position="336"/>
        <end position="345"/>
    </location>
</feature>
<feature type="compositionally biased region" description="Polar residues" evidence="3">
    <location>
        <begin position="379"/>
        <end position="397"/>
    </location>
</feature>
<feature type="compositionally biased region" description="Polar residues" evidence="3">
    <location>
        <begin position="427"/>
        <end position="436"/>
    </location>
</feature>
<feature type="compositionally biased region" description="Polar residues" evidence="3">
    <location>
        <begin position="446"/>
        <end position="464"/>
    </location>
</feature>
<feature type="compositionally biased region" description="Basic and acidic residues" evidence="3">
    <location>
        <begin position="465"/>
        <end position="492"/>
    </location>
</feature>
<feature type="compositionally biased region" description="Basic and acidic residues" evidence="3">
    <location>
        <begin position="499"/>
        <end position="522"/>
    </location>
</feature>
<gene>
    <name type="primary">SEMG2</name>
</gene>
<proteinExistence type="inferred from homology"/>
<dbReference type="EMBL" id="AY259291">
    <property type="protein sequence ID" value="AAP86629.1"/>
    <property type="molecule type" value="Genomic_DNA"/>
</dbReference>
<dbReference type="SMR" id="Q6X2M3"/>
<dbReference type="GO" id="GO:0070062">
    <property type="term" value="C:extracellular exosome"/>
    <property type="evidence" value="ECO:0007669"/>
    <property type="project" value="TreeGrafter"/>
</dbReference>
<dbReference type="GO" id="GO:0050817">
    <property type="term" value="P:coagulation"/>
    <property type="evidence" value="ECO:0007669"/>
    <property type="project" value="InterPro"/>
</dbReference>
<dbReference type="GO" id="GO:1901318">
    <property type="term" value="P:negative regulation of flagellated sperm motility"/>
    <property type="evidence" value="ECO:0007669"/>
    <property type="project" value="InterPro"/>
</dbReference>
<dbReference type="GO" id="GO:0048240">
    <property type="term" value="P:sperm capacitation"/>
    <property type="evidence" value="ECO:0007669"/>
    <property type="project" value="TreeGrafter"/>
</dbReference>
<dbReference type="InterPro" id="IPR008836">
    <property type="entry name" value="Semenogelin"/>
</dbReference>
<dbReference type="PANTHER" id="PTHR10547:SF6">
    <property type="entry name" value="SEMENOGELIN-2"/>
    <property type="match status" value="1"/>
</dbReference>
<dbReference type="PANTHER" id="PTHR10547">
    <property type="entry name" value="SEMENOGELIN/SEMINAL VESICLE SECRETORY PROTEIN"/>
    <property type="match status" value="1"/>
</dbReference>
<dbReference type="Pfam" id="PF05474">
    <property type="entry name" value="Semenogelin"/>
    <property type="match status" value="2"/>
</dbReference>
<name>SEMG2_HYLKL</name>